<feature type="chain" id="PRO_1000119416" description="Small ribosomal subunit protein uS2">
    <location>
        <begin position="1"/>
        <end position="233"/>
    </location>
</feature>
<accession>B7IUI6</accession>
<sequence length="233" mass="26563">MSVISMKQLLEAGVHFGHQTRRWNPKMKRYIFTERNGIYIIDLQKTVKKVEEAYRTMRDIAAEGGDILFVGTKKQAQEAIKEEATRAGMYFVNQRWLGGTLTNFQTIQKRIKRLKDIERMQEDGTFEVLPKKEVVQLKKELERLEKFLGGIKDMKGLPSALFVVDPRKERIAVAEARKLHIPIIGIVDTNCDPDEIDHVIPANDDAIRAVKLLTSKMADAILEAKQGEETVTA</sequence>
<keyword id="KW-0687">Ribonucleoprotein</keyword>
<keyword id="KW-0689">Ribosomal protein</keyword>
<protein>
    <recommendedName>
        <fullName evidence="1">Small ribosomal subunit protein uS2</fullName>
    </recommendedName>
    <alternativeName>
        <fullName evidence="2">30S ribosomal protein S2</fullName>
    </alternativeName>
</protein>
<reference key="1">
    <citation type="submission" date="2008-10" db="EMBL/GenBank/DDBJ databases">
        <title>Genome sequence of Bacillus cereus G9842.</title>
        <authorList>
            <person name="Dodson R.J."/>
            <person name="Durkin A.S."/>
            <person name="Rosovitz M.J."/>
            <person name="Rasko D.A."/>
            <person name="Hoffmaster A."/>
            <person name="Ravel J."/>
            <person name="Sutton G."/>
        </authorList>
    </citation>
    <scope>NUCLEOTIDE SEQUENCE [LARGE SCALE GENOMIC DNA]</scope>
    <source>
        <strain>G9842</strain>
    </source>
</reference>
<organism>
    <name type="scientific">Bacillus cereus (strain G9842)</name>
    <dbReference type="NCBI Taxonomy" id="405531"/>
    <lineage>
        <taxon>Bacteria</taxon>
        <taxon>Bacillati</taxon>
        <taxon>Bacillota</taxon>
        <taxon>Bacilli</taxon>
        <taxon>Bacillales</taxon>
        <taxon>Bacillaceae</taxon>
        <taxon>Bacillus</taxon>
        <taxon>Bacillus cereus group</taxon>
    </lineage>
</organism>
<name>RS2_BACC2</name>
<proteinExistence type="inferred from homology"/>
<evidence type="ECO:0000255" key="1">
    <source>
        <dbReference type="HAMAP-Rule" id="MF_00291"/>
    </source>
</evidence>
<evidence type="ECO:0000305" key="2"/>
<dbReference type="EMBL" id="CP001186">
    <property type="protein sequence ID" value="ACK93328.1"/>
    <property type="molecule type" value="Genomic_DNA"/>
</dbReference>
<dbReference type="RefSeq" id="WP_000111485.1">
    <property type="nucleotide sequence ID" value="NC_011772.1"/>
</dbReference>
<dbReference type="SMR" id="B7IUI6"/>
<dbReference type="GeneID" id="93007285"/>
<dbReference type="KEGG" id="bcg:BCG9842_B1318"/>
<dbReference type="HOGENOM" id="CLU_040318_1_2_9"/>
<dbReference type="Proteomes" id="UP000006744">
    <property type="component" value="Chromosome"/>
</dbReference>
<dbReference type="GO" id="GO:0022627">
    <property type="term" value="C:cytosolic small ribosomal subunit"/>
    <property type="evidence" value="ECO:0007669"/>
    <property type="project" value="TreeGrafter"/>
</dbReference>
<dbReference type="GO" id="GO:0003735">
    <property type="term" value="F:structural constituent of ribosome"/>
    <property type="evidence" value="ECO:0007669"/>
    <property type="project" value="InterPro"/>
</dbReference>
<dbReference type="GO" id="GO:0006412">
    <property type="term" value="P:translation"/>
    <property type="evidence" value="ECO:0007669"/>
    <property type="project" value="UniProtKB-UniRule"/>
</dbReference>
<dbReference type="CDD" id="cd01425">
    <property type="entry name" value="RPS2"/>
    <property type="match status" value="1"/>
</dbReference>
<dbReference type="FunFam" id="1.10.287.610:FF:000001">
    <property type="entry name" value="30S ribosomal protein S2"/>
    <property type="match status" value="1"/>
</dbReference>
<dbReference type="Gene3D" id="3.40.50.10490">
    <property type="entry name" value="Glucose-6-phosphate isomerase like protein, domain 1"/>
    <property type="match status" value="1"/>
</dbReference>
<dbReference type="Gene3D" id="1.10.287.610">
    <property type="entry name" value="Helix hairpin bin"/>
    <property type="match status" value="1"/>
</dbReference>
<dbReference type="HAMAP" id="MF_00291_B">
    <property type="entry name" value="Ribosomal_uS2_B"/>
    <property type="match status" value="1"/>
</dbReference>
<dbReference type="InterPro" id="IPR001865">
    <property type="entry name" value="Ribosomal_uS2"/>
</dbReference>
<dbReference type="InterPro" id="IPR005706">
    <property type="entry name" value="Ribosomal_uS2_bac/mit/plastid"/>
</dbReference>
<dbReference type="InterPro" id="IPR018130">
    <property type="entry name" value="Ribosomal_uS2_CS"/>
</dbReference>
<dbReference type="InterPro" id="IPR023591">
    <property type="entry name" value="Ribosomal_uS2_flav_dom_sf"/>
</dbReference>
<dbReference type="NCBIfam" id="TIGR01011">
    <property type="entry name" value="rpsB_bact"/>
    <property type="match status" value="1"/>
</dbReference>
<dbReference type="PANTHER" id="PTHR12534">
    <property type="entry name" value="30S RIBOSOMAL PROTEIN S2 PROKARYOTIC AND ORGANELLAR"/>
    <property type="match status" value="1"/>
</dbReference>
<dbReference type="PANTHER" id="PTHR12534:SF0">
    <property type="entry name" value="SMALL RIBOSOMAL SUBUNIT PROTEIN US2M"/>
    <property type="match status" value="1"/>
</dbReference>
<dbReference type="Pfam" id="PF00318">
    <property type="entry name" value="Ribosomal_S2"/>
    <property type="match status" value="1"/>
</dbReference>
<dbReference type="PRINTS" id="PR00395">
    <property type="entry name" value="RIBOSOMALS2"/>
</dbReference>
<dbReference type="SUPFAM" id="SSF52313">
    <property type="entry name" value="Ribosomal protein S2"/>
    <property type="match status" value="1"/>
</dbReference>
<dbReference type="PROSITE" id="PS00962">
    <property type="entry name" value="RIBOSOMAL_S2_1"/>
    <property type="match status" value="1"/>
</dbReference>
<dbReference type="PROSITE" id="PS00963">
    <property type="entry name" value="RIBOSOMAL_S2_2"/>
    <property type="match status" value="1"/>
</dbReference>
<gene>
    <name evidence="1" type="primary">rpsB</name>
    <name type="ordered locus">BCG9842_B1318</name>
</gene>
<comment type="similarity">
    <text evidence="1">Belongs to the universal ribosomal protein uS2 family.</text>
</comment>